<proteinExistence type="predicted"/>
<reference key="1">
    <citation type="journal article" date="2004" name="Science">
        <title>The 1.2-megabase genome sequence of Mimivirus.</title>
        <authorList>
            <person name="Raoult D."/>
            <person name="Audic S."/>
            <person name="Robert C."/>
            <person name="Abergel C."/>
            <person name="Renesto P."/>
            <person name="Ogata H."/>
            <person name="La Scola B."/>
            <person name="Susan M."/>
            <person name="Claverie J.-M."/>
        </authorList>
    </citation>
    <scope>NUCLEOTIDE SEQUENCE [LARGE SCALE GENOMIC DNA]</scope>
    <source>
        <strain>Rowbotham-Bradford</strain>
    </source>
</reference>
<keyword id="KW-0040">ANK repeat</keyword>
<keyword id="KW-1185">Reference proteome</keyword>
<keyword id="KW-0677">Repeat</keyword>
<gene>
    <name type="ordered locus">MIMI_L768</name>
</gene>
<organism>
    <name type="scientific">Acanthamoeba polyphaga mimivirus</name>
    <name type="common">APMV</name>
    <dbReference type="NCBI Taxonomy" id="212035"/>
    <lineage>
        <taxon>Viruses</taxon>
        <taxon>Varidnaviria</taxon>
        <taxon>Bamfordvirae</taxon>
        <taxon>Nucleocytoviricota</taxon>
        <taxon>Megaviricetes</taxon>
        <taxon>Imitervirales</taxon>
        <taxon>Mimiviridae</taxon>
        <taxon>Megamimivirinae</taxon>
        <taxon>Mimivirus</taxon>
        <taxon>Mimivirus bradfordmassiliense</taxon>
    </lineage>
</organism>
<protein>
    <recommendedName>
        <fullName>Putative ankyrin repeat protein L768</fullName>
    </recommendedName>
</protein>
<accession>Q5UPR0</accession>
<name>YL768_MIMIV</name>
<feature type="chain" id="PRO_0000067195" description="Putative ankyrin repeat protein L768">
    <location>
        <begin position="1"/>
        <end position="626"/>
    </location>
</feature>
<feature type="repeat" description="ANK 1">
    <location>
        <begin position="217"/>
        <end position="246"/>
    </location>
</feature>
<feature type="repeat" description="ANK 2">
    <location>
        <begin position="333"/>
        <end position="362"/>
    </location>
</feature>
<feature type="repeat" description="ANK 3">
    <location>
        <begin position="421"/>
        <end position="451"/>
    </location>
</feature>
<feature type="repeat" description="ANK 4">
    <location>
        <begin position="515"/>
        <end position="545"/>
    </location>
</feature>
<feature type="repeat" description="ANK 5">
    <location>
        <begin position="547"/>
        <end position="571"/>
    </location>
</feature>
<dbReference type="EMBL" id="AY653733">
    <property type="protein sequence ID" value="AAV51028.1"/>
    <property type="molecule type" value="Genomic_DNA"/>
</dbReference>
<dbReference type="SMR" id="Q5UPR0"/>
<dbReference type="KEGG" id="vg:9925426"/>
<dbReference type="OrthoDB" id="35160at10239"/>
<dbReference type="Proteomes" id="UP000001134">
    <property type="component" value="Genome"/>
</dbReference>
<dbReference type="InterPro" id="IPR002110">
    <property type="entry name" value="Ankyrin_rpt"/>
</dbReference>
<dbReference type="InterPro" id="IPR036770">
    <property type="entry name" value="Ankyrin_rpt-contain_sf"/>
</dbReference>
<dbReference type="SMART" id="SM00248">
    <property type="entry name" value="ANK"/>
    <property type="match status" value="3"/>
</dbReference>
<dbReference type="SUPFAM" id="SSF48403">
    <property type="entry name" value="Ankyrin repeat"/>
    <property type="match status" value="1"/>
</dbReference>
<organismHost>
    <name type="scientific">Acanthamoeba polyphaga</name>
    <name type="common">Amoeba</name>
    <dbReference type="NCBI Taxonomy" id="5757"/>
</organismHost>
<sequence length="626" mass="74076">MESKTYYIFRNPDNPNYPVYHIINEKHVFKYTDFKIKEIIQVEPDYSKPDLKFTEYEDGIYATNYINEIAKISLLDVNNIDKLLFNFSYESFGPTYRLYSRFLSDNRLDLCDYLIEKNIKLTQFADYCIFNFMVNPSKESLMYIIDHNDFFQISWETIFKSIIPFTRDGEITDYLITLMDNINYKIDYDDIIKNVITNSYTLDIKNIEPIIEKTNINLYDVFKYACSRGKLHIIDYLLDKRIEYDFYELIKCDISTRTLNFFIEKGYYLDGIAIDIIINSEPHNIYKMVKFLIDQKYLTQDLITKQLLDTIIKTNINNLRLFINDFDVVDLVDLDMIIVMAIEFNSMELINWCMNNGININKYMSIIMKKCRPTIISGLIELGAQIPNDKSYYDPTIIENYCMGSDCISYLKTIIEKEFDTAENIIHNIIENRPHIEILKYLLTEVQTEHITIPKLTNVIIRNYYYDNDYCPEYYEDLIKSGIQFDIEQQTIIQIIEKKIVDVQGVIFSNCELSSNLKILFVTIMTDNIDILEFLLEINKYNQDYLQWALIFSSNNITILEYIINNTNVNPISFKQEMSTMAGHNNYYSIDYLRLNGFYTNNDVPTDSKLADFMNEIGIDIFNPNF</sequence>